<protein>
    <recommendedName>
        <fullName evidence="1">Large ribosomal subunit protein uL2</fullName>
    </recommendedName>
    <alternativeName>
        <fullName evidence="3">50S ribosomal protein L2</fullName>
    </alternativeName>
</protein>
<proteinExistence type="inferred from homology"/>
<name>RL2_BRUSI</name>
<comment type="function">
    <text evidence="1">One of the primary rRNA binding proteins. Required for association of the 30S and 50S subunits to form the 70S ribosome, for tRNA binding and peptide bond formation. It has been suggested to have peptidyltransferase activity; this is somewhat controversial. Makes several contacts with the 16S rRNA in the 70S ribosome.</text>
</comment>
<comment type="subunit">
    <text evidence="1">Part of the 50S ribosomal subunit. Forms a bridge to the 30S subunit in the 70S ribosome.</text>
</comment>
<comment type="similarity">
    <text evidence="1">Belongs to the universal ribosomal protein uL2 family.</text>
</comment>
<keyword id="KW-0687">Ribonucleoprotein</keyword>
<keyword id="KW-0689">Ribosomal protein</keyword>
<keyword id="KW-0694">RNA-binding</keyword>
<keyword id="KW-0699">rRNA-binding</keyword>
<dbReference type="EMBL" id="CP000911">
    <property type="protein sequence ID" value="ABY38330.1"/>
    <property type="molecule type" value="Genomic_DNA"/>
</dbReference>
<dbReference type="RefSeq" id="WP_004690917.1">
    <property type="nucleotide sequence ID" value="NC_010169.1"/>
</dbReference>
<dbReference type="SMR" id="B0CH29"/>
<dbReference type="GeneID" id="55590905"/>
<dbReference type="KEGG" id="bmt:BSUIS_A1279"/>
<dbReference type="HOGENOM" id="CLU_036235_2_1_5"/>
<dbReference type="Proteomes" id="UP000008545">
    <property type="component" value="Chromosome I"/>
</dbReference>
<dbReference type="GO" id="GO:0015934">
    <property type="term" value="C:large ribosomal subunit"/>
    <property type="evidence" value="ECO:0007669"/>
    <property type="project" value="InterPro"/>
</dbReference>
<dbReference type="GO" id="GO:0019843">
    <property type="term" value="F:rRNA binding"/>
    <property type="evidence" value="ECO:0007669"/>
    <property type="project" value="UniProtKB-UniRule"/>
</dbReference>
<dbReference type="GO" id="GO:0003735">
    <property type="term" value="F:structural constituent of ribosome"/>
    <property type="evidence" value="ECO:0007669"/>
    <property type="project" value="InterPro"/>
</dbReference>
<dbReference type="GO" id="GO:0016740">
    <property type="term" value="F:transferase activity"/>
    <property type="evidence" value="ECO:0007669"/>
    <property type="project" value="InterPro"/>
</dbReference>
<dbReference type="GO" id="GO:0002181">
    <property type="term" value="P:cytoplasmic translation"/>
    <property type="evidence" value="ECO:0007669"/>
    <property type="project" value="TreeGrafter"/>
</dbReference>
<dbReference type="FunFam" id="2.30.30.30:FF:000055">
    <property type="entry name" value="50S ribosomal protein L2"/>
    <property type="match status" value="1"/>
</dbReference>
<dbReference type="FunFam" id="2.40.50.140:FF:000003">
    <property type="entry name" value="50S ribosomal protein L2"/>
    <property type="match status" value="1"/>
</dbReference>
<dbReference type="FunFam" id="4.10.950.10:FF:000001">
    <property type="entry name" value="50S ribosomal protein L2"/>
    <property type="match status" value="1"/>
</dbReference>
<dbReference type="Gene3D" id="2.30.30.30">
    <property type="match status" value="1"/>
</dbReference>
<dbReference type="Gene3D" id="2.40.50.140">
    <property type="entry name" value="Nucleic acid-binding proteins"/>
    <property type="match status" value="1"/>
</dbReference>
<dbReference type="Gene3D" id="4.10.950.10">
    <property type="entry name" value="Ribosomal protein L2, domain 3"/>
    <property type="match status" value="1"/>
</dbReference>
<dbReference type="HAMAP" id="MF_01320_B">
    <property type="entry name" value="Ribosomal_uL2_B"/>
    <property type="match status" value="1"/>
</dbReference>
<dbReference type="InterPro" id="IPR012340">
    <property type="entry name" value="NA-bd_OB-fold"/>
</dbReference>
<dbReference type="InterPro" id="IPR014722">
    <property type="entry name" value="Rib_uL2_dom2"/>
</dbReference>
<dbReference type="InterPro" id="IPR002171">
    <property type="entry name" value="Ribosomal_uL2"/>
</dbReference>
<dbReference type="InterPro" id="IPR005880">
    <property type="entry name" value="Ribosomal_uL2_bac/org-type"/>
</dbReference>
<dbReference type="InterPro" id="IPR022669">
    <property type="entry name" value="Ribosomal_uL2_C"/>
</dbReference>
<dbReference type="InterPro" id="IPR022671">
    <property type="entry name" value="Ribosomal_uL2_CS"/>
</dbReference>
<dbReference type="InterPro" id="IPR014726">
    <property type="entry name" value="Ribosomal_uL2_dom3"/>
</dbReference>
<dbReference type="InterPro" id="IPR022666">
    <property type="entry name" value="Ribosomal_uL2_RNA-bd_dom"/>
</dbReference>
<dbReference type="InterPro" id="IPR008991">
    <property type="entry name" value="Translation_prot_SH3-like_sf"/>
</dbReference>
<dbReference type="NCBIfam" id="TIGR01171">
    <property type="entry name" value="rplB_bact"/>
    <property type="match status" value="1"/>
</dbReference>
<dbReference type="PANTHER" id="PTHR13691:SF5">
    <property type="entry name" value="LARGE RIBOSOMAL SUBUNIT PROTEIN UL2M"/>
    <property type="match status" value="1"/>
</dbReference>
<dbReference type="PANTHER" id="PTHR13691">
    <property type="entry name" value="RIBOSOMAL PROTEIN L2"/>
    <property type="match status" value="1"/>
</dbReference>
<dbReference type="Pfam" id="PF00181">
    <property type="entry name" value="Ribosomal_L2"/>
    <property type="match status" value="1"/>
</dbReference>
<dbReference type="Pfam" id="PF03947">
    <property type="entry name" value="Ribosomal_L2_C"/>
    <property type="match status" value="1"/>
</dbReference>
<dbReference type="PIRSF" id="PIRSF002158">
    <property type="entry name" value="Ribosomal_L2"/>
    <property type="match status" value="1"/>
</dbReference>
<dbReference type="SMART" id="SM01383">
    <property type="entry name" value="Ribosomal_L2"/>
    <property type="match status" value="1"/>
</dbReference>
<dbReference type="SMART" id="SM01382">
    <property type="entry name" value="Ribosomal_L2_C"/>
    <property type="match status" value="1"/>
</dbReference>
<dbReference type="SUPFAM" id="SSF50249">
    <property type="entry name" value="Nucleic acid-binding proteins"/>
    <property type="match status" value="1"/>
</dbReference>
<dbReference type="SUPFAM" id="SSF50104">
    <property type="entry name" value="Translation proteins SH3-like domain"/>
    <property type="match status" value="1"/>
</dbReference>
<dbReference type="PROSITE" id="PS00467">
    <property type="entry name" value="RIBOSOMAL_L2"/>
    <property type="match status" value="1"/>
</dbReference>
<accession>B0CH29</accession>
<organism>
    <name type="scientific">Brucella suis (strain ATCC 23445 / NCTC 10510)</name>
    <dbReference type="NCBI Taxonomy" id="470137"/>
    <lineage>
        <taxon>Bacteria</taxon>
        <taxon>Pseudomonadati</taxon>
        <taxon>Pseudomonadota</taxon>
        <taxon>Alphaproteobacteria</taxon>
        <taxon>Hyphomicrobiales</taxon>
        <taxon>Brucellaceae</taxon>
        <taxon>Brucella/Ochrobactrum group</taxon>
        <taxon>Brucella</taxon>
    </lineage>
</organism>
<feature type="chain" id="PRO_1000086320" description="Large ribosomal subunit protein uL2">
    <location>
        <begin position="1"/>
        <end position="277"/>
    </location>
</feature>
<feature type="region of interest" description="Disordered" evidence="2">
    <location>
        <begin position="222"/>
        <end position="277"/>
    </location>
</feature>
<gene>
    <name evidence="1" type="primary">rplB</name>
    <name type="ordered locus">BSUIS_A1279</name>
</gene>
<reference key="1">
    <citation type="submission" date="2007-12" db="EMBL/GenBank/DDBJ databases">
        <title>Brucella suis ATCC 23445 whole genome shotgun sequencing project.</title>
        <authorList>
            <person name="Setubal J.C."/>
            <person name="Bowns C."/>
            <person name="Boyle S."/>
            <person name="Crasta O.R."/>
            <person name="Czar M.J."/>
            <person name="Dharmanolla C."/>
            <person name="Gillespie J.J."/>
            <person name="Kenyon R.W."/>
            <person name="Lu J."/>
            <person name="Mane S."/>
            <person name="Mohapatra S."/>
            <person name="Nagrani S."/>
            <person name="Purkayastha A."/>
            <person name="Rajasimha H.K."/>
            <person name="Shallom J.M."/>
            <person name="Shallom S."/>
            <person name="Shukla M."/>
            <person name="Snyder E.E."/>
            <person name="Sobral B.W."/>
            <person name="Wattam A.R."/>
            <person name="Will R."/>
            <person name="Williams K."/>
            <person name="Yoo H."/>
            <person name="Bruce D."/>
            <person name="Detter C."/>
            <person name="Munk C."/>
            <person name="Brettin T.S."/>
        </authorList>
    </citation>
    <scope>NUCLEOTIDE SEQUENCE [LARGE SCALE GENOMIC DNA]</scope>
    <source>
        <strain>ATCC 23445 / NCTC 10510</strain>
    </source>
</reference>
<sequence length="277" mass="30178">MALKHFNPITPGQRQLVIVDRSELYKGKPVKPLTEGLSKKGGRNNTGRITVRFQGGGHKRSYRFIDFKRRKLDVVGTVERLEYDPNRTAFIALIRYTDGELAYILAPQRLAVGDQVVAGNSVDVKPGNAMPLSSMPVGTIIHNVELKPGKGGQIARSAGTYAQLVGRDQGMAILRLNSGEQRLVSGACFASVGAVSNPDHGNINDGKAGRSVWRGKRPHVRGVAMNPVDHPHGGGEGRTSGGRHPVTPWGKPTKGKKTRSNKATDKFIMRSRHQRKK</sequence>
<evidence type="ECO:0000255" key="1">
    <source>
        <dbReference type="HAMAP-Rule" id="MF_01320"/>
    </source>
</evidence>
<evidence type="ECO:0000256" key="2">
    <source>
        <dbReference type="SAM" id="MobiDB-lite"/>
    </source>
</evidence>
<evidence type="ECO:0000305" key="3"/>